<keyword id="KW-0472">Membrane</keyword>
<keyword id="KW-1185">Reference proteome</keyword>
<keyword id="KW-0812">Transmembrane</keyword>
<keyword id="KW-1133">Transmembrane helix</keyword>
<keyword id="KW-0813">Transport</keyword>
<keyword id="KW-0926">Vacuole</keyword>
<name>MTPC4_ARATH</name>
<organism>
    <name type="scientific">Arabidopsis thaliana</name>
    <name type="common">Mouse-ear cress</name>
    <dbReference type="NCBI Taxonomy" id="3702"/>
    <lineage>
        <taxon>Eukaryota</taxon>
        <taxon>Viridiplantae</taxon>
        <taxon>Streptophyta</taxon>
        <taxon>Embryophyta</taxon>
        <taxon>Tracheophyta</taxon>
        <taxon>Spermatophyta</taxon>
        <taxon>Magnoliopsida</taxon>
        <taxon>eudicotyledons</taxon>
        <taxon>Gunneridae</taxon>
        <taxon>Pentapetalae</taxon>
        <taxon>rosids</taxon>
        <taxon>malvids</taxon>
        <taxon>Brassicales</taxon>
        <taxon>Brassicaceae</taxon>
        <taxon>Camelineae</taxon>
        <taxon>Arabidopsis</taxon>
    </lineage>
</organism>
<gene>
    <name type="primary">MTPC4</name>
    <name type="synonym">MTP7</name>
    <name type="ordered locus">At1g51610</name>
    <name type="ORF">F19C24.16</name>
    <name type="ORF">F5D21.21</name>
</gene>
<dbReference type="EMBL" id="AC024261">
    <property type="protein sequence ID" value="AAG52617.1"/>
    <property type="status" value="ALT_SEQ"/>
    <property type="molecule type" value="Genomic_DNA"/>
</dbReference>
<dbReference type="EMBL" id="AC025294">
    <property type="protein sequence ID" value="AAG50870.1"/>
    <property type="status" value="ALT_SEQ"/>
    <property type="molecule type" value="Genomic_DNA"/>
</dbReference>
<dbReference type="EMBL" id="CP002684">
    <property type="protein sequence ID" value="AEE32690.1"/>
    <property type="molecule type" value="Genomic_DNA"/>
</dbReference>
<dbReference type="EMBL" id="AY050856">
    <property type="protein sequence ID" value="AAK92793.1"/>
    <property type="molecule type" value="mRNA"/>
</dbReference>
<dbReference type="EMBL" id="AY150383">
    <property type="protein sequence ID" value="AAN12928.1"/>
    <property type="molecule type" value="mRNA"/>
</dbReference>
<dbReference type="PIR" id="G96554">
    <property type="entry name" value="G96554"/>
</dbReference>
<dbReference type="RefSeq" id="NP_564594.1">
    <property type="nucleotide sequence ID" value="NM_104039.4"/>
</dbReference>
<dbReference type="FunCoup" id="Q8H1G3">
    <property type="interactions" value="2336"/>
</dbReference>
<dbReference type="STRING" id="3702.Q8H1G3"/>
<dbReference type="TCDB" id="2.A.4.6.2">
    <property type="family name" value="the cation diffusion facilitator (cdf) family"/>
</dbReference>
<dbReference type="GlyGen" id="Q8H1G3">
    <property type="glycosylation" value="2 sites"/>
</dbReference>
<dbReference type="iPTMnet" id="Q8H1G3"/>
<dbReference type="PaxDb" id="3702-AT1G51610.1"/>
<dbReference type="ProteomicsDB" id="250991"/>
<dbReference type="EnsemblPlants" id="AT1G51610.1">
    <property type="protein sequence ID" value="AT1G51610.1"/>
    <property type="gene ID" value="AT1G51610"/>
</dbReference>
<dbReference type="GeneID" id="841586"/>
<dbReference type="Gramene" id="AT1G51610.1">
    <property type="protein sequence ID" value="AT1G51610.1"/>
    <property type="gene ID" value="AT1G51610"/>
</dbReference>
<dbReference type="KEGG" id="ath:AT1G51610"/>
<dbReference type="Araport" id="AT1G51610"/>
<dbReference type="TAIR" id="AT1G51610"/>
<dbReference type="eggNOG" id="KOG2802">
    <property type="taxonomic scope" value="Eukaryota"/>
</dbReference>
<dbReference type="HOGENOM" id="CLU_021126_1_1_1"/>
<dbReference type="InParanoid" id="Q8H1G3"/>
<dbReference type="OMA" id="GIQNLWT"/>
<dbReference type="OrthoDB" id="435980at2759"/>
<dbReference type="PhylomeDB" id="Q8H1G3"/>
<dbReference type="PRO" id="PR:Q8H1G3"/>
<dbReference type="Proteomes" id="UP000006548">
    <property type="component" value="Chromosome 1"/>
</dbReference>
<dbReference type="ExpressionAtlas" id="Q8H1G3">
    <property type="expression patterns" value="baseline and differential"/>
</dbReference>
<dbReference type="GO" id="GO:0005774">
    <property type="term" value="C:vacuolar membrane"/>
    <property type="evidence" value="ECO:0007669"/>
    <property type="project" value="UniProtKB-SubCell"/>
</dbReference>
<dbReference type="GO" id="GO:0008324">
    <property type="term" value="F:monoatomic cation transmembrane transporter activity"/>
    <property type="evidence" value="ECO:0007669"/>
    <property type="project" value="InterPro"/>
</dbReference>
<dbReference type="GO" id="GO:0006829">
    <property type="term" value="P:zinc ion transport"/>
    <property type="evidence" value="ECO:0007669"/>
    <property type="project" value="InterPro"/>
</dbReference>
<dbReference type="Gene3D" id="1.20.1510.10">
    <property type="entry name" value="Cation efflux protein transmembrane domain"/>
    <property type="match status" value="1"/>
</dbReference>
<dbReference type="InterPro" id="IPR002524">
    <property type="entry name" value="Cation_efflux"/>
</dbReference>
<dbReference type="InterPro" id="IPR027469">
    <property type="entry name" value="Cation_efflux_TMD_sf"/>
</dbReference>
<dbReference type="InterPro" id="IPR040177">
    <property type="entry name" value="SLC30A9"/>
</dbReference>
<dbReference type="NCBIfam" id="TIGR01297">
    <property type="entry name" value="CDF"/>
    <property type="match status" value="1"/>
</dbReference>
<dbReference type="PANTHER" id="PTHR13414">
    <property type="entry name" value="HUEL-CATION TRANSPORTER"/>
    <property type="match status" value="1"/>
</dbReference>
<dbReference type="PANTHER" id="PTHR13414:SF9">
    <property type="entry name" value="PROTON-COUPLED ZINC ANTIPORTER SLC30A9, MITOCHONDRIAL"/>
    <property type="match status" value="1"/>
</dbReference>
<dbReference type="Pfam" id="PF01545">
    <property type="entry name" value="Cation_efflux"/>
    <property type="match status" value="1"/>
</dbReference>
<dbReference type="SUPFAM" id="SSF161111">
    <property type="entry name" value="Cation efflux protein transmembrane domain-like"/>
    <property type="match status" value="1"/>
</dbReference>
<sequence>MQSSHRILSRLLHSPRKGYIRASVGGSVHFLALFDEKDNGFVDTTHRSFSSLIRSSSHVRGLISTNCLNKGLGVRCSVSLDRETPLIDTYSSHRNFFTRAKQVKRIEINDQHSQRAVTTALWCNFLVFSLKFGVWWTSSSHVIMAEVVHSVADFANQALLAYGLSSSRRAPDALHPYGYSKERFVWSLISAVGIFCLGSGATIVNGVQNLWTSSPPPNMELAAVVIGGSFLIEGASLLVAIQSVKKGAAQEGMTIRDYIWRGHDPTSVAVMTEDGAAVAGLAIAAASLVAVRMTGNPIYDPIGSIVVGNLLGMVAIFLIQRNRHALIGRAMDDQDMSKVLKFLRNDSVVDSLYDCKSEVIGPGSFRFKAEIDFNGQMVVQNYLKRTGREEWAKMFREAAKNGDDSAMLNIMSNYGEEVVTALGSEVDRLEKEIQELVPGIQHVDIEAHNPTPTDPSL</sequence>
<feature type="chain" id="PRO_0000206123" description="Metal tolerance protein C4">
    <location>
        <begin position="1"/>
        <end position="457"/>
    </location>
</feature>
<feature type="topological domain" description="Cytoplasmic" evidence="2">
    <location>
        <begin position="1"/>
        <end position="115"/>
    </location>
</feature>
<feature type="transmembrane region" description="Helical" evidence="2">
    <location>
        <begin position="116"/>
        <end position="136"/>
    </location>
</feature>
<feature type="topological domain" description="Vacuolar" evidence="2">
    <location>
        <begin position="137"/>
        <end position="141"/>
    </location>
</feature>
<feature type="transmembrane region" description="Helical" evidence="2">
    <location>
        <begin position="142"/>
        <end position="162"/>
    </location>
</feature>
<feature type="topological domain" description="Cytoplasmic" evidence="2">
    <location>
        <begin position="163"/>
        <end position="183"/>
    </location>
</feature>
<feature type="transmembrane region" description="Helical" evidence="2">
    <location>
        <begin position="184"/>
        <end position="204"/>
    </location>
</feature>
<feature type="topological domain" description="Vacuolar" evidence="2">
    <location>
        <begin position="205"/>
        <end position="220"/>
    </location>
</feature>
<feature type="transmembrane region" description="Helical" evidence="2">
    <location>
        <begin position="221"/>
        <end position="241"/>
    </location>
</feature>
<feature type="topological domain" description="Cytoplasmic" evidence="2">
    <location>
        <begin position="242"/>
        <end position="267"/>
    </location>
</feature>
<feature type="transmembrane region" description="Helical" evidence="2">
    <location>
        <begin position="268"/>
        <end position="288"/>
    </location>
</feature>
<feature type="topological domain" description="Vacuolar" evidence="2">
    <location>
        <begin position="289"/>
        <end position="297"/>
    </location>
</feature>
<feature type="transmembrane region" description="Helical" evidence="2">
    <location>
        <begin position="298"/>
        <end position="318"/>
    </location>
</feature>
<feature type="topological domain" description="Cytoplasmic" evidence="2">
    <location>
        <begin position="319"/>
        <end position="457"/>
    </location>
</feature>
<feature type="sequence conflict" description="In Ref. 3; AAK92793." evidence="3" ref="3">
    <original>E</original>
    <variation>G</variation>
    <location>
        <position position="435"/>
    </location>
</feature>
<comment type="function">
    <text evidence="1">Involved in sequestration of excess metal in the cytoplasm into vacuoles to maintain metal homeostasis.</text>
</comment>
<comment type="subcellular location">
    <subcellularLocation>
        <location evidence="1">Vacuole membrane</location>
        <topology evidence="1">Multi-pass membrane protein</topology>
    </subcellularLocation>
    <text>Tonoplast.</text>
</comment>
<comment type="similarity">
    <text evidence="3">Belongs to the cation diffusion facilitator (CDF) transporter (TC 2.A.4) family.</text>
</comment>
<comment type="sequence caution" evidence="3">
    <conflict type="erroneous gene model prediction">
        <sequence resource="EMBL-CDS" id="AAG50870"/>
    </conflict>
</comment>
<comment type="sequence caution" evidence="3">
    <conflict type="erroneous gene model prediction">
        <sequence resource="EMBL-CDS" id="AAG52617"/>
    </conflict>
</comment>
<proteinExistence type="evidence at transcript level"/>
<protein>
    <recommendedName>
        <fullName>Metal tolerance protein C4</fullName>
        <shortName>AtMTPc4</shortName>
    </recommendedName>
    <alternativeName>
        <fullName>AtMTP7</fullName>
    </alternativeName>
</protein>
<evidence type="ECO:0000250" key="1"/>
<evidence type="ECO:0000255" key="2"/>
<evidence type="ECO:0000305" key="3"/>
<reference key="1">
    <citation type="journal article" date="2000" name="Nature">
        <title>Sequence and analysis of chromosome 1 of the plant Arabidopsis thaliana.</title>
        <authorList>
            <person name="Theologis A."/>
            <person name="Ecker J.R."/>
            <person name="Palm C.J."/>
            <person name="Federspiel N.A."/>
            <person name="Kaul S."/>
            <person name="White O."/>
            <person name="Alonso J."/>
            <person name="Altafi H."/>
            <person name="Araujo R."/>
            <person name="Bowman C.L."/>
            <person name="Brooks S.Y."/>
            <person name="Buehler E."/>
            <person name="Chan A."/>
            <person name="Chao Q."/>
            <person name="Chen H."/>
            <person name="Cheuk R.F."/>
            <person name="Chin C.W."/>
            <person name="Chung M.K."/>
            <person name="Conn L."/>
            <person name="Conway A.B."/>
            <person name="Conway A.R."/>
            <person name="Creasy T.H."/>
            <person name="Dewar K."/>
            <person name="Dunn P."/>
            <person name="Etgu P."/>
            <person name="Feldblyum T.V."/>
            <person name="Feng J.-D."/>
            <person name="Fong B."/>
            <person name="Fujii C.Y."/>
            <person name="Gill J.E."/>
            <person name="Goldsmith A.D."/>
            <person name="Haas B."/>
            <person name="Hansen N.F."/>
            <person name="Hughes B."/>
            <person name="Huizar L."/>
            <person name="Hunter J.L."/>
            <person name="Jenkins J."/>
            <person name="Johnson-Hopson C."/>
            <person name="Khan S."/>
            <person name="Khaykin E."/>
            <person name="Kim C.J."/>
            <person name="Koo H.L."/>
            <person name="Kremenetskaia I."/>
            <person name="Kurtz D.B."/>
            <person name="Kwan A."/>
            <person name="Lam B."/>
            <person name="Langin-Hooper S."/>
            <person name="Lee A."/>
            <person name="Lee J.M."/>
            <person name="Lenz C.A."/>
            <person name="Li J.H."/>
            <person name="Li Y.-P."/>
            <person name="Lin X."/>
            <person name="Liu S.X."/>
            <person name="Liu Z.A."/>
            <person name="Luros J.S."/>
            <person name="Maiti R."/>
            <person name="Marziali A."/>
            <person name="Militscher J."/>
            <person name="Miranda M."/>
            <person name="Nguyen M."/>
            <person name="Nierman W.C."/>
            <person name="Osborne B.I."/>
            <person name="Pai G."/>
            <person name="Peterson J."/>
            <person name="Pham P.K."/>
            <person name="Rizzo M."/>
            <person name="Rooney T."/>
            <person name="Rowley D."/>
            <person name="Sakano H."/>
            <person name="Salzberg S.L."/>
            <person name="Schwartz J.R."/>
            <person name="Shinn P."/>
            <person name="Southwick A.M."/>
            <person name="Sun H."/>
            <person name="Tallon L.J."/>
            <person name="Tambunga G."/>
            <person name="Toriumi M.J."/>
            <person name="Town C.D."/>
            <person name="Utterback T."/>
            <person name="Van Aken S."/>
            <person name="Vaysberg M."/>
            <person name="Vysotskaia V.S."/>
            <person name="Walker M."/>
            <person name="Wu D."/>
            <person name="Yu G."/>
            <person name="Fraser C.M."/>
            <person name="Venter J.C."/>
            <person name="Davis R.W."/>
        </authorList>
    </citation>
    <scope>NUCLEOTIDE SEQUENCE [LARGE SCALE GENOMIC DNA]</scope>
    <source>
        <strain>cv. Columbia</strain>
    </source>
</reference>
<reference key="2">
    <citation type="journal article" date="2017" name="Plant J.">
        <title>Araport11: a complete reannotation of the Arabidopsis thaliana reference genome.</title>
        <authorList>
            <person name="Cheng C.Y."/>
            <person name="Krishnakumar V."/>
            <person name="Chan A.P."/>
            <person name="Thibaud-Nissen F."/>
            <person name="Schobel S."/>
            <person name="Town C.D."/>
        </authorList>
    </citation>
    <scope>GENOME REANNOTATION</scope>
    <source>
        <strain>cv. Columbia</strain>
    </source>
</reference>
<reference key="3">
    <citation type="journal article" date="2003" name="Science">
        <title>Empirical analysis of transcriptional activity in the Arabidopsis genome.</title>
        <authorList>
            <person name="Yamada K."/>
            <person name="Lim J."/>
            <person name="Dale J.M."/>
            <person name="Chen H."/>
            <person name="Shinn P."/>
            <person name="Palm C.J."/>
            <person name="Southwick A.M."/>
            <person name="Wu H.C."/>
            <person name="Kim C.J."/>
            <person name="Nguyen M."/>
            <person name="Pham P.K."/>
            <person name="Cheuk R.F."/>
            <person name="Karlin-Newmann G."/>
            <person name="Liu S.X."/>
            <person name="Lam B."/>
            <person name="Sakano H."/>
            <person name="Wu T."/>
            <person name="Yu G."/>
            <person name="Miranda M."/>
            <person name="Quach H.L."/>
            <person name="Tripp M."/>
            <person name="Chang C.H."/>
            <person name="Lee J.M."/>
            <person name="Toriumi M.J."/>
            <person name="Chan M.M."/>
            <person name="Tang C.C."/>
            <person name="Onodera C.S."/>
            <person name="Deng J.M."/>
            <person name="Akiyama K."/>
            <person name="Ansari Y."/>
            <person name="Arakawa T."/>
            <person name="Banh J."/>
            <person name="Banno F."/>
            <person name="Bowser L."/>
            <person name="Brooks S.Y."/>
            <person name="Carninci P."/>
            <person name="Chao Q."/>
            <person name="Choy N."/>
            <person name="Enju A."/>
            <person name="Goldsmith A.D."/>
            <person name="Gurjal M."/>
            <person name="Hansen N.F."/>
            <person name="Hayashizaki Y."/>
            <person name="Johnson-Hopson C."/>
            <person name="Hsuan V.W."/>
            <person name="Iida K."/>
            <person name="Karnes M."/>
            <person name="Khan S."/>
            <person name="Koesema E."/>
            <person name="Ishida J."/>
            <person name="Jiang P.X."/>
            <person name="Jones T."/>
            <person name="Kawai J."/>
            <person name="Kamiya A."/>
            <person name="Meyers C."/>
            <person name="Nakajima M."/>
            <person name="Narusaka M."/>
            <person name="Seki M."/>
            <person name="Sakurai T."/>
            <person name="Satou M."/>
            <person name="Tamse R."/>
            <person name="Vaysberg M."/>
            <person name="Wallender E.K."/>
            <person name="Wong C."/>
            <person name="Yamamura Y."/>
            <person name="Yuan S."/>
            <person name="Shinozaki K."/>
            <person name="Davis R.W."/>
            <person name="Theologis A."/>
            <person name="Ecker J.R."/>
        </authorList>
    </citation>
    <scope>NUCLEOTIDE SEQUENCE [LARGE SCALE MRNA]</scope>
    <source>
        <strain>cv. Columbia</strain>
    </source>
</reference>
<reference key="4">
    <citation type="journal article" date="2001" name="Plant Physiol.">
        <title>Phylogenetic relationships within cation transporter families of Arabidopsis.</title>
        <authorList>
            <person name="Maeser P."/>
            <person name="Thomine S."/>
            <person name="Schroeder J.I."/>
            <person name="Ward J.M."/>
            <person name="Hirschi K."/>
            <person name="Sze H."/>
            <person name="Talke I.N."/>
            <person name="Amtmann A."/>
            <person name="Maathuis F.J.M."/>
            <person name="Sanders D."/>
            <person name="Harper J.F."/>
            <person name="Tchieu J."/>
            <person name="Gribskov M."/>
            <person name="Persans M.W."/>
            <person name="Salt D.E."/>
            <person name="Kim S.A."/>
            <person name="Guerinot M.L."/>
        </authorList>
    </citation>
    <scope>GENE FAMILY</scope>
    <scope>NOMENCLATURE</scope>
</reference>
<accession>Q8H1G3</accession>
<accession>Q949W1</accession>
<accession>Q9C531</accession>